<accession>Q7MHF1</accession>
<keyword id="KW-0665">Pyrimidine biosynthesis</keyword>
<keyword id="KW-0808">Transferase</keyword>
<organism>
    <name type="scientific">Vibrio vulnificus (strain YJ016)</name>
    <dbReference type="NCBI Taxonomy" id="196600"/>
    <lineage>
        <taxon>Bacteria</taxon>
        <taxon>Pseudomonadati</taxon>
        <taxon>Pseudomonadota</taxon>
        <taxon>Gammaproteobacteria</taxon>
        <taxon>Vibrionales</taxon>
        <taxon>Vibrionaceae</taxon>
        <taxon>Vibrio</taxon>
    </lineage>
</organism>
<proteinExistence type="inferred from homology"/>
<gene>
    <name evidence="1" type="primary">pyrB</name>
    <name type="ordered locus">VV2920</name>
</gene>
<sequence length="309" mass="34266">MTNSLYKKHIISIPELSRAELELIVKTAGQLKAEPNPELIKNKVVASCFFEPSTRTRLSFETAIQRIGGDVIGFDDGGNTSLAKKGETLSDSVQVISNYVDAFVMRHPQEGAARLASEFSNGVPVINAGDGANQHPTQTLLDLFTISETQDRLDNLNVAFVGDLKYGRTVHSLTQALAKFNNIRFFFVAPDALAMPDYILEDLDEAGISYSLHTDMETVIPELDILYMTRVQKERFDESEYAHIKSAYILTAALLEGARENLKVLHPLPRVDEITTDVDKTPHAYYFQQAGNGVYAREALLALVLNESL</sequence>
<reference key="1">
    <citation type="journal article" date="2003" name="Genome Res.">
        <title>Comparative genome analysis of Vibrio vulnificus, a marine pathogen.</title>
        <authorList>
            <person name="Chen C.-Y."/>
            <person name="Wu K.-M."/>
            <person name="Chang Y.-C."/>
            <person name="Chang C.-H."/>
            <person name="Tsai H.-C."/>
            <person name="Liao T.-L."/>
            <person name="Liu Y.-M."/>
            <person name="Chen H.-J."/>
            <person name="Shen A.B.-T."/>
            <person name="Li J.-C."/>
            <person name="Su T.-L."/>
            <person name="Shao C.-P."/>
            <person name="Lee C.-T."/>
            <person name="Hor L.-I."/>
            <person name="Tsai S.-F."/>
        </authorList>
    </citation>
    <scope>NUCLEOTIDE SEQUENCE [LARGE SCALE GENOMIC DNA]</scope>
    <source>
        <strain>YJ016</strain>
    </source>
</reference>
<name>PYRB_VIBVY</name>
<feature type="chain" id="PRO_0000113227" description="Aspartate carbamoyltransferase catalytic subunit">
    <location>
        <begin position="1"/>
        <end position="309"/>
    </location>
</feature>
<feature type="binding site" evidence="1">
    <location>
        <position position="55"/>
    </location>
    <ligand>
        <name>carbamoyl phosphate</name>
        <dbReference type="ChEBI" id="CHEBI:58228"/>
    </ligand>
</feature>
<feature type="binding site" evidence="1">
    <location>
        <position position="56"/>
    </location>
    <ligand>
        <name>carbamoyl phosphate</name>
        <dbReference type="ChEBI" id="CHEBI:58228"/>
    </ligand>
</feature>
<feature type="binding site" evidence="1">
    <location>
        <position position="85"/>
    </location>
    <ligand>
        <name>L-aspartate</name>
        <dbReference type="ChEBI" id="CHEBI:29991"/>
    </ligand>
</feature>
<feature type="binding site" evidence="1">
    <location>
        <position position="106"/>
    </location>
    <ligand>
        <name>carbamoyl phosphate</name>
        <dbReference type="ChEBI" id="CHEBI:58228"/>
    </ligand>
</feature>
<feature type="binding site" evidence="1">
    <location>
        <position position="135"/>
    </location>
    <ligand>
        <name>carbamoyl phosphate</name>
        <dbReference type="ChEBI" id="CHEBI:58228"/>
    </ligand>
</feature>
<feature type="binding site" evidence="1">
    <location>
        <position position="138"/>
    </location>
    <ligand>
        <name>carbamoyl phosphate</name>
        <dbReference type="ChEBI" id="CHEBI:58228"/>
    </ligand>
</feature>
<feature type="binding site" evidence="1">
    <location>
        <position position="168"/>
    </location>
    <ligand>
        <name>L-aspartate</name>
        <dbReference type="ChEBI" id="CHEBI:29991"/>
    </ligand>
</feature>
<feature type="binding site" evidence="1">
    <location>
        <position position="230"/>
    </location>
    <ligand>
        <name>L-aspartate</name>
        <dbReference type="ChEBI" id="CHEBI:29991"/>
    </ligand>
</feature>
<feature type="binding site" evidence="1">
    <location>
        <position position="268"/>
    </location>
    <ligand>
        <name>carbamoyl phosphate</name>
        <dbReference type="ChEBI" id="CHEBI:58228"/>
    </ligand>
</feature>
<feature type="binding site" evidence="1">
    <location>
        <position position="269"/>
    </location>
    <ligand>
        <name>carbamoyl phosphate</name>
        <dbReference type="ChEBI" id="CHEBI:58228"/>
    </ligand>
</feature>
<evidence type="ECO:0000255" key="1">
    <source>
        <dbReference type="HAMAP-Rule" id="MF_00001"/>
    </source>
</evidence>
<dbReference type="EC" id="2.1.3.2" evidence="1"/>
<dbReference type="EMBL" id="BA000037">
    <property type="protein sequence ID" value="BAC95684.1"/>
    <property type="molecule type" value="Genomic_DNA"/>
</dbReference>
<dbReference type="RefSeq" id="WP_011151229.1">
    <property type="nucleotide sequence ID" value="NC_005139.1"/>
</dbReference>
<dbReference type="SMR" id="Q7MHF1"/>
<dbReference type="STRING" id="672.VV93_v1c26430"/>
<dbReference type="KEGG" id="vvy:VV2920"/>
<dbReference type="PATRIC" id="fig|196600.6.peg.2901"/>
<dbReference type="eggNOG" id="COG0540">
    <property type="taxonomic scope" value="Bacteria"/>
</dbReference>
<dbReference type="HOGENOM" id="CLU_043846_1_2_6"/>
<dbReference type="UniPathway" id="UPA00070">
    <property type="reaction ID" value="UER00116"/>
</dbReference>
<dbReference type="Proteomes" id="UP000002675">
    <property type="component" value="Chromosome I"/>
</dbReference>
<dbReference type="GO" id="GO:0005829">
    <property type="term" value="C:cytosol"/>
    <property type="evidence" value="ECO:0007669"/>
    <property type="project" value="TreeGrafter"/>
</dbReference>
<dbReference type="GO" id="GO:0016597">
    <property type="term" value="F:amino acid binding"/>
    <property type="evidence" value="ECO:0007669"/>
    <property type="project" value="InterPro"/>
</dbReference>
<dbReference type="GO" id="GO:0004070">
    <property type="term" value="F:aspartate carbamoyltransferase activity"/>
    <property type="evidence" value="ECO:0007669"/>
    <property type="project" value="UniProtKB-UniRule"/>
</dbReference>
<dbReference type="GO" id="GO:0006207">
    <property type="term" value="P:'de novo' pyrimidine nucleobase biosynthetic process"/>
    <property type="evidence" value="ECO:0007669"/>
    <property type="project" value="InterPro"/>
</dbReference>
<dbReference type="GO" id="GO:0044205">
    <property type="term" value="P:'de novo' UMP biosynthetic process"/>
    <property type="evidence" value="ECO:0007669"/>
    <property type="project" value="UniProtKB-UniRule"/>
</dbReference>
<dbReference type="GO" id="GO:0006520">
    <property type="term" value="P:amino acid metabolic process"/>
    <property type="evidence" value="ECO:0007669"/>
    <property type="project" value="InterPro"/>
</dbReference>
<dbReference type="FunFam" id="3.40.50.1370:FF:000001">
    <property type="entry name" value="Aspartate carbamoyltransferase"/>
    <property type="match status" value="1"/>
</dbReference>
<dbReference type="FunFam" id="3.40.50.1370:FF:000002">
    <property type="entry name" value="Aspartate carbamoyltransferase 2"/>
    <property type="match status" value="1"/>
</dbReference>
<dbReference type="Gene3D" id="3.40.50.1370">
    <property type="entry name" value="Aspartate/ornithine carbamoyltransferase"/>
    <property type="match status" value="2"/>
</dbReference>
<dbReference type="HAMAP" id="MF_00001">
    <property type="entry name" value="Asp_carb_tr"/>
    <property type="match status" value="1"/>
</dbReference>
<dbReference type="InterPro" id="IPR006132">
    <property type="entry name" value="Asp/Orn_carbamoyltranf_P-bd"/>
</dbReference>
<dbReference type="InterPro" id="IPR006130">
    <property type="entry name" value="Asp/Orn_carbamoylTrfase"/>
</dbReference>
<dbReference type="InterPro" id="IPR036901">
    <property type="entry name" value="Asp/Orn_carbamoylTrfase_sf"/>
</dbReference>
<dbReference type="InterPro" id="IPR002082">
    <property type="entry name" value="Asp_carbamoyltransf"/>
</dbReference>
<dbReference type="InterPro" id="IPR006131">
    <property type="entry name" value="Asp_carbamoyltransf_Asp/Orn-bd"/>
</dbReference>
<dbReference type="NCBIfam" id="TIGR00670">
    <property type="entry name" value="asp_carb_tr"/>
    <property type="match status" value="1"/>
</dbReference>
<dbReference type="NCBIfam" id="NF002032">
    <property type="entry name" value="PRK00856.1"/>
    <property type="match status" value="1"/>
</dbReference>
<dbReference type="PANTHER" id="PTHR45753:SF6">
    <property type="entry name" value="ASPARTATE CARBAMOYLTRANSFERASE"/>
    <property type="match status" value="1"/>
</dbReference>
<dbReference type="PANTHER" id="PTHR45753">
    <property type="entry name" value="ORNITHINE CARBAMOYLTRANSFERASE, MITOCHONDRIAL"/>
    <property type="match status" value="1"/>
</dbReference>
<dbReference type="Pfam" id="PF00185">
    <property type="entry name" value="OTCace"/>
    <property type="match status" value="1"/>
</dbReference>
<dbReference type="Pfam" id="PF02729">
    <property type="entry name" value="OTCace_N"/>
    <property type="match status" value="1"/>
</dbReference>
<dbReference type="PRINTS" id="PR00100">
    <property type="entry name" value="AOTCASE"/>
</dbReference>
<dbReference type="PRINTS" id="PR00101">
    <property type="entry name" value="ATCASE"/>
</dbReference>
<dbReference type="SUPFAM" id="SSF53671">
    <property type="entry name" value="Aspartate/ornithine carbamoyltransferase"/>
    <property type="match status" value="1"/>
</dbReference>
<dbReference type="PROSITE" id="PS00097">
    <property type="entry name" value="CARBAMOYLTRANSFERASE"/>
    <property type="match status" value="1"/>
</dbReference>
<protein>
    <recommendedName>
        <fullName evidence="1">Aspartate carbamoyltransferase catalytic subunit</fullName>
        <ecNumber evidence="1">2.1.3.2</ecNumber>
    </recommendedName>
    <alternativeName>
        <fullName evidence="1">Aspartate transcarbamylase</fullName>
        <shortName evidence="1">ATCase</shortName>
    </alternativeName>
</protein>
<comment type="function">
    <text evidence="1">Catalyzes the condensation of carbamoyl phosphate and aspartate to form carbamoyl aspartate and inorganic phosphate, the committed step in the de novo pyrimidine nucleotide biosynthesis pathway.</text>
</comment>
<comment type="catalytic activity">
    <reaction evidence="1">
        <text>carbamoyl phosphate + L-aspartate = N-carbamoyl-L-aspartate + phosphate + H(+)</text>
        <dbReference type="Rhea" id="RHEA:20013"/>
        <dbReference type="ChEBI" id="CHEBI:15378"/>
        <dbReference type="ChEBI" id="CHEBI:29991"/>
        <dbReference type="ChEBI" id="CHEBI:32814"/>
        <dbReference type="ChEBI" id="CHEBI:43474"/>
        <dbReference type="ChEBI" id="CHEBI:58228"/>
        <dbReference type="EC" id="2.1.3.2"/>
    </reaction>
</comment>
<comment type="pathway">
    <text evidence="1">Pyrimidine metabolism; UMP biosynthesis via de novo pathway; (S)-dihydroorotate from bicarbonate: step 2/3.</text>
</comment>
<comment type="subunit">
    <text evidence="1">Heterododecamer (2C3:3R2) of six catalytic PyrB chains organized as two trimers (C3), and six regulatory PyrI chains organized as three dimers (R2).</text>
</comment>
<comment type="similarity">
    <text evidence="1">Belongs to the aspartate/ornithine carbamoyltransferase superfamily. ATCase family.</text>
</comment>